<name>HSLU_RHOPS</name>
<proteinExistence type="inferred from homology"/>
<organism>
    <name type="scientific">Rhodopseudomonas palustris (strain BisB5)</name>
    <dbReference type="NCBI Taxonomy" id="316057"/>
    <lineage>
        <taxon>Bacteria</taxon>
        <taxon>Pseudomonadati</taxon>
        <taxon>Pseudomonadota</taxon>
        <taxon>Alphaproteobacteria</taxon>
        <taxon>Hyphomicrobiales</taxon>
        <taxon>Nitrobacteraceae</taxon>
        <taxon>Rhodopseudomonas</taxon>
    </lineage>
</organism>
<reference key="1">
    <citation type="submission" date="2006-03" db="EMBL/GenBank/DDBJ databases">
        <title>Complete sequence of Rhodopseudomonas palustris BisB5.</title>
        <authorList>
            <consortium name="US DOE Joint Genome Institute"/>
            <person name="Copeland A."/>
            <person name="Lucas S."/>
            <person name="Lapidus A."/>
            <person name="Barry K."/>
            <person name="Detter J.C."/>
            <person name="Glavina del Rio T."/>
            <person name="Hammon N."/>
            <person name="Israni S."/>
            <person name="Dalin E."/>
            <person name="Tice H."/>
            <person name="Pitluck S."/>
            <person name="Chain P."/>
            <person name="Malfatti S."/>
            <person name="Shin M."/>
            <person name="Vergez L."/>
            <person name="Schmutz J."/>
            <person name="Larimer F."/>
            <person name="Land M."/>
            <person name="Hauser L."/>
            <person name="Pelletier D.A."/>
            <person name="Kyrpides N."/>
            <person name="Lykidis A."/>
            <person name="Oda Y."/>
            <person name="Harwood C.S."/>
            <person name="Richardson P."/>
        </authorList>
    </citation>
    <scope>NUCLEOTIDE SEQUENCE [LARGE SCALE GENOMIC DNA]</scope>
    <source>
        <strain>BisB5</strain>
    </source>
</reference>
<protein>
    <recommendedName>
        <fullName evidence="1">ATP-dependent protease ATPase subunit HslU</fullName>
    </recommendedName>
    <alternativeName>
        <fullName evidence="1">Unfoldase HslU</fullName>
    </alternativeName>
</protein>
<dbReference type="EMBL" id="CP000283">
    <property type="protein sequence ID" value="ABE37656.1"/>
    <property type="molecule type" value="Genomic_DNA"/>
</dbReference>
<dbReference type="SMR" id="Q13E33"/>
<dbReference type="STRING" id="316057.RPD_0418"/>
<dbReference type="KEGG" id="rpd:RPD_0418"/>
<dbReference type="eggNOG" id="COG1220">
    <property type="taxonomic scope" value="Bacteria"/>
</dbReference>
<dbReference type="HOGENOM" id="CLU_033123_0_0_5"/>
<dbReference type="BioCyc" id="RPAL316057:RPD_RS02150-MONOMER"/>
<dbReference type="Proteomes" id="UP000001818">
    <property type="component" value="Chromosome"/>
</dbReference>
<dbReference type="GO" id="GO:0009376">
    <property type="term" value="C:HslUV protease complex"/>
    <property type="evidence" value="ECO:0007669"/>
    <property type="project" value="UniProtKB-UniRule"/>
</dbReference>
<dbReference type="GO" id="GO:0005524">
    <property type="term" value="F:ATP binding"/>
    <property type="evidence" value="ECO:0007669"/>
    <property type="project" value="UniProtKB-UniRule"/>
</dbReference>
<dbReference type="GO" id="GO:0016887">
    <property type="term" value="F:ATP hydrolysis activity"/>
    <property type="evidence" value="ECO:0007669"/>
    <property type="project" value="InterPro"/>
</dbReference>
<dbReference type="GO" id="GO:0008233">
    <property type="term" value="F:peptidase activity"/>
    <property type="evidence" value="ECO:0007669"/>
    <property type="project" value="InterPro"/>
</dbReference>
<dbReference type="GO" id="GO:0036402">
    <property type="term" value="F:proteasome-activating activity"/>
    <property type="evidence" value="ECO:0007669"/>
    <property type="project" value="UniProtKB-UniRule"/>
</dbReference>
<dbReference type="GO" id="GO:0043335">
    <property type="term" value="P:protein unfolding"/>
    <property type="evidence" value="ECO:0007669"/>
    <property type="project" value="UniProtKB-UniRule"/>
</dbReference>
<dbReference type="GO" id="GO:0051603">
    <property type="term" value="P:proteolysis involved in protein catabolic process"/>
    <property type="evidence" value="ECO:0007669"/>
    <property type="project" value="TreeGrafter"/>
</dbReference>
<dbReference type="CDD" id="cd19498">
    <property type="entry name" value="RecA-like_HslU"/>
    <property type="match status" value="1"/>
</dbReference>
<dbReference type="FunFam" id="3.40.50.300:FF:000213">
    <property type="entry name" value="ATP-dependent protease ATPase subunit HslU"/>
    <property type="match status" value="1"/>
</dbReference>
<dbReference type="FunFam" id="3.40.50.300:FF:000220">
    <property type="entry name" value="ATP-dependent protease ATPase subunit HslU"/>
    <property type="match status" value="1"/>
</dbReference>
<dbReference type="Gene3D" id="1.10.8.60">
    <property type="match status" value="1"/>
</dbReference>
<dbReference type="Gene3D" id="3.40.50.300">
    <property type="entry name" value="P-loop containing nucleotide triphosphate hydrolases"/>
    <property type="match status" value="2"/>
</dbReference>
<dbReference type="HAMAP" id="MF_00249">
    <property type="entry name" value="HslU"/>
    <property type="match status" value="1"/>
</dbReference>
<dbReference type="InterPro" id="IPR003593">
    <property type="entry name" value="AAA+_ATPase"/>
</dbReference>
<dbReference type="InterPro" id="IPR050052">
    <property type="entry name" value="ATP-dep_Clp_protease_ClpX"/>
</dbReference>
<dbReference type="InterPro" id="IPR003959">
    <property type="entry name" value="ATPase_AAA_core"/>
</dbReference>
<dbReference type="InterPro" id="IPR019489">
    <property type="entry name" value="Clp_ATPase_C"/>
</dbReference>
<dbReference type="InterPro" id="IPR004491">
    <property type="entry name" value="HslU"/>
</dbReference>
<dbReference type="InterPro" id="IPR027417">
    <property type="entry name" value="P-loop_NTPase"/>
</dbReference>
<dbReference type="NCBIfam" id="TIGR00390">
    <property type="entry name" value="hslU"/>
    <property type="match status" value="1"/>
</dbReference>
<dbReference type="NCBIfam" id="NF003544">
    <property type="entry name" value="PRK05201.1"/>
    <property type="match status" value="1"/>
</dbReference>
<dbReference type="PANTHER" id="PTHR48102">
    <property type="entry name" value="ATP-DEPENDENT CLP PROTEASE ATP-BINDING SUBUNIT CLPX-LIKE, MITOCHONDRIAL-RELATED"/>
    <property type="match status" value="1"/>
</dbReference>
<dbReference type="PANTHER" id="PTHR48102:SF3">
    <property type="entry name" value="ATP-DEPENDENT PROTEASE ATPASE SUBUNIT HSLU"/>
    <property type="match status" value="1"/>
</dbReference>
<dbReference type="Pfam" id="PF00004">
    <property type="entry name" value="AAA"/>
    <property type="match status" value="1"/>
</dbReference>
<dbReference type="Pfam" id="PF07724">
    <property type="entry name" value="AAA_2"/>
    <property type="match status" value="1"/>
</dbReference>
<dbReference type="Pfam" id="PF10431">
    <property type="entry name" value="ClpB_D2-small"/>
    <property type="match status" value="1"/>
</dbReference>
<dbReference type="SMART" id="SM00382">
    <property type="entry name" value="AAA"/>
    <property type="match status" value="1"/>
</dbReference>
<dbReference type="SMART" id="SM01086">
    <property type="entry name" value="ClpB_D2-small"/>
    <property type="match status" value="1"/>
</dbReference>
<dbReference type="SUPFAM" id="SSF52540">
    <property type="entry name" value="P-loop containing nucleoside triphosphate hydrolases"/>
    <property type="match status" value="1"/>
</dbReference>
<evidence type="ECO:0000255" key="1">
    <source>
        <dbReference type="HAMAP-Rule" id="MF_00249"/>
    </source>
</evidence>
<keyword id="KW-0067">ATP-binding</keyword>
<keyword id="KW-0143">Chaperone</keyword>
<keyword id="KW-0963">Cytoplasm</keyword>
<keyword id="KW-0547">Nucleotide-binding</keyword>
<keyword id="KW-0346">Stress response</keyword>
<feature type="chain" id="PRO_1000012789" description="ATP-dependent protease ATPase subunit HslU">
    <location>
        <begin position="1"/>
        <end position="433"/>
    </location>
</feature>
<feature type="binding site" evidence="1">
    <location>
        <position position="18"/>
    </location>
    <ligand>
        <name>ATP</name>
        <dbReference type="ChEBI" id="CHEBI:30616"/>
    </ligand>
</feature>
<feature type="binding site" evidence="1">
    <location>
        <begin position="60"/>
        <end position="65"/>
    </location>
    <ligand>
        <name>ATP</name>
        <dbReference type="ChEBI" id="CHEBI:30616"/>
    </ligand>
</feature>
<feature type="binding site" evidence="1">
    <location>
        <position position="246"/>
    </location>
    <ligand>
        <name>ATP</name>
        <dbReference type="ChEBI" id="CHEBI:30616"/>
    </ligand>
</feature>
<feature type="binding site" evidence="1">
    <location>
        <position position="311"/>
    </location>
    <ligand>
        <name>ATP</name>
        <dbReference type="ChEBI" id="CHEBI:30616"/>
    </ligand>
</feature>
<feature type="binding site" evidence="1">
    <location>
        <position position="383"/>
    </location>
    <ligand>
        <name>ATP</name>
        <dbReference type="ChEBI" id="CHEBI:30616"/>
    </ligand>
</feature>
<accession>Q13E33</accession>
<comment type="function">
    <text evidence="1">ATPase subunit of a proteasome-like degradation complex; this subunit has chaperone activity. The binding of ATP and its subsequent hydrolysis by HslU are essential for unfolding of protein substrates subsequently hydrolyzed by HslV. HslU recognizes the N-terminal part of its protein substrates and unfolds these before they are guided to HslV for hydrolysis.</text>
</comment>
<comment type="subunit">
    <text evidence="1">A double ring-shaped homohexamer of HslV is capped on each side by a ring-shaped HslU homohexamer. The assembly of the HslU/HslV complex is dependent on binding of ATP.</text>
</comment>
<comment type="subcellular location">
    <subcellularLocation>
        <location evidence="1">Cytoplasm</location>
    </subcellularLocation>
</comment>
<comment type="similarity">
    <text evidence="1">Belongs to the ClpX chaperone family. HslU subfamily.</text>
</comment>
<gene>
    <name evidence="1" type="primary">hslU</name>
    <name type="ordered locus">RPD_0418</name>
</gene>
<sequence>MTDFSPREIVSELDRFIVGQADAKRAVAIALRNRWRRLQLEGILREEVLPKNILMIGPTGVGKTEIARRLAKLAGAPFLKVEATKFTEVGYVGRDVEQIIRDLVEVAIAQVRERKRKDVQARAQIAAEERVLDALVGPGSSPATRDSFRRKLRAGDLNDKEIEVETQASSGSPMFEIPGMPGGQIGAISIGDIFGKMGGRTKTRRLTVADSHDILINEEADKLLDNDQLVQEAINVVENNGIVFLDEIDKICVRDGRSGGEVSREGVQRDLLPLIEGTTVATKHGAVKTEHILFIASGAFHIAKPSDLLPELQGRLPIRVELNALTRDDMRRILTEPEASLIKQYIALLQTEGVTLEFSDDAIDALADVAVGVNSTVENIGARRLQTVMERVLDEISFVAPDRGGETIRIDADYVQKNVGDLAKNTDLSRFIL</sequence>